<proteinExistence type="inferred from homology"/>
<evidence type="ECO:0000250" key="1"/>
<evidence type="ECO:0000255" key="2"/>
<evidence type="ECO:0000255" key="3">
    <source>
        <dbReference type="PROSITE-ProRule" id="PRU00691"/>
    </source>
</evidence>
<evidence type="ECO:0000305" key="4"/>
<protein>
    <recommendedName>
        <fullName>Thiol:disulfide interchange protein CycY</fullName>
    </recommendedName>
    <alternativeName>
        <fullName>Cytochrome c biogenesis protein CycY</fullName>
    </alternativeName>
</protein>
<accession>P45409</accession>
<organism>
    <name type="scientific">Rhizobium leguminosarum bv. viciae</name>
    <dbReference type="NCBI Taxonomy" id="387"/>
    <lineage>
        <taxon>Bacteria</taxon>
        <taxon>Pseudomonadati</taxon>
        <taxon>Pseudomonadota</taxon>
        <taxon>Alphaproteobacteria</taxon>
        <taxon>Hyphomicrobiales</taxon>
        <taxon>Rhizobiaceae</taxon>
        <taxon>Rhizobium/Agrobacterium group</taxon>
        <taxon>Rhizobium</taxon>
    </lineage>
</organism>
<dbReference type="EMBL" id="X79307">
    <property type="protein sequence ID" value="CAB61632.1"/>
    <property type="molecule type" value="Genomic_DNA"/>
</dbReference>
<dbReference type="SMR" id="P45409"/>
<dbReference type="GO" id="GO:0030288">
    <property type="term" value="C:outer membrane-bounded periplasmic space"/>
    <property type="evidence" value="ECO:0007669"/>
    <property type="project" value="InterPro"/>
</dbReference>
<dbReference type="GO" id="GO:0015036">
    <property type="term" value="F:disulfide oxidoreductase activity"/>
    <property type="evidence" value="ECO:0007669"/>
    <property type="project" value="InterPro"/>
</dbReference>
<dbReference type="GO" id="GO:0017004">
    <property type="term" value="P:cytochrome complex assembly"/>
    <property type="evidence" value="ECO:0007669"/>
    <property type="project" value="UniProtKB-KW"/>
</dbReference>
<dbReference type="CDD" id="cd03010">
    <property type="entry name" value="TlpA_like_DsbE"/>
    <property type="match status" value="1"/>
</dbReference>
<dbReference type="Gene3D" id="3.40.30.10">
    <property type="entry name" value="Glutaredoxin"/>
    <property type="match status" value="1"/>
</dbReference>
<dbReference type="InterPro" id="IPR004799">
    <property type="entry name" value="Periplasmic_diS_OxRdtase_DsbE"/>
</dbReference>
<dbReference type="InterPro" id="IPR013740">
    <property type="entry name" value="Redoxin"/>
</dbReference>
<dbReference type="InterPro" id="IPR036249">
    <property type="entry name" value="Thioredoxin-like_sf"/>
</dbReference>
<dbReference type="InterPro" id="IPR017937">
    <property type="entry name" value="Thioredoxin_CS"/>
</dbReference>
<dbReference type="InterPro" id="IPR013766">
    <property type="entry name" value="Thioredoxin_domain"/>
</dbReference>
<dbReference type="InterPro" id="IPR050553">
    <property type="entry name" value="Thioredoxin_ResA/DsbE_sf"/>
</dbReference>
<dbReference type="NCBIfam" id="TIGR00385">
    <property type="entry name" value="dsbE"/>
    <property type="match status" value="1"/>
</dbReference>
<dbReference type="PANTHER" id="PTHR42852">
    <property type="entry name" value="THIOL:DISULFIDE INTERCHANGE PROTEIN DSBE"/>
    <property type="match status" value="1"/>
</dbReference>
<dbReference type="PANTHER" id="PTHR42852:SF6">
    <property type="entry name" value="THIOL:DISULFIDE INTERCHANGE PROTEIN DSBE"/>
    <property type="match status" value="1"/>
</dbReference>
<dbReference type="Pfam" id="PF08534">
    <property type="entry name" value="Redoxin"/>
    <property type="match status" value="1"/>
</dbReference>
<dbReference type="SUPFAM" id="SSF52833">
    <property type="entry name" value="Thioredoxin-like"/>
    <property type="match status" value="1"/>
</dbReference>
<dbReference type="PROSITE" id="PS00194">
    <property type="entry name" value="THIOREDOXIN_1"/>
    <property type="match status" value="1"/>
</dbReference>
<dbReference type="PROSITE" id="PS51352">
    <property type="entry name" value="THIOREDOXIN_2"/>
    <property type="match status" value="1"/>
</dbReference>
<gene>
    <name type="primary">cycY</name>
</gene>
<sequence length="186" mass="19836">MGRYTLALLPLIVFGGIAHGAKMLYDQDFHGKNIAEIPSALSHQGADAEPAAARRATLPALTDAAIKGKLTLVNVFASWCLPCRDEHPVLKELAKDGRLNIVAINYKDQSDNALRFLGELGNPYQAIGIDPNGKAAIDWGVYGIPESYLVGADGTILYKRVGPSTNISLKEGLVPAMEKALGKPVS</sequence>
<feature type="signal peptide" evidence="2">
    <location>
        <begin position="1"/>
        <end position="20"/>
    </location>
</feature>
<feature type="chain" id="PRO_0000034288" description="Thiol:disulfide interchange protein CycY">
    <location>
        <begin position="21"/>
        <end position="186"/>
    </location>
</feature>
<feature type="domain" description="Thioredoxin" evidence="3">
    <location>
        <begin position="47"/>
        <end position="182"/>
    </location>
</feature>
<feature type="disulfide bond" description="Redox-active" evidence="3">
    <location>
        <begin position="80"/>
        <end position="83"/>
    </location>
</feature>
<keyword id="KW-0201">Cytochrome c-type biogenesis</keyword>
<keyword id="KW-1015">Disulfide bond</keyword>
<keyword id="KW-0574">Periplasm</keyword>
<keyword id="KW-0676">Redox-active center</keyword>
<keyword id="KW-0732">Signal</keyword>
<reference key="1">
    <citation type="journal article" date="1994" name="J. Bacteriol.">
        <title>Identification of a gene encoding a thioredoxin-like product necessary for cytochrome c biosynthesis and symbiotic nitrogen fixation in Rhizobium leguminosarum.</title>
        <authorList>
            <person name="Vargas C."/>
            <person name="Wu G."/>
            <person name="Davies A.E."/>
            <person name="Downie J.A."/>
        </authorList>
    </citation>
    <scope>NUCLEOTIDE SEQUENCE [GENOMIC DNA]</scope>
    <source>
        <strain>8401</strain>
    </source>
</reference>
<comment type="function">
    <text evidence="1">Required for disulfide bond formation in some periplasmic proteins. Also acts as a disulfide oxidoreductase in cytochromes c biogenesis. The cysteines of apocytochromes c must be in the reduced state for covalent linkage between the two moieties to occur (By similarity).</text>
</comment>
<comment type="subcellular location">
    <subcellularLocation>
        <location evidence="4">Periplasm</location>
    </subcellularLocation>
</comment>
<comment type="similarity">
    <text evidence="4">Belongs to the thioredoxin family. DsbE subfamily.</text>
</comment>
<name>CYCY_RHILV</name>